<reference key="1">
    <citation type="journal article" date="2008" name="J. Bacteriol.">
        <title>The genome sequence of the tomato-pathogenic actinomycete Clavibacter michiganensis subsp. michiganensis NCPPB382 reveals a large island involved in pathogenicity.</title>
        <authorList>
            <person name="Gartemann K.-H."/>
            <person name="Abt B."/>
            <person name="Bekel T."/>
            <person name="Burger A."/>
            <person name="Engemann J."/>
            <person name="Fluegel M."/>
            <person name="Gaigalat L."/>
            <person name="Goesmann A."/>
            <person name="Graefen I."/>
            <person name="Kalinowski J."/>
            <person name="Kaup O."/>
            <person name="Kirchner O."/>
            <person name="Krause L."/>
            <person name="Linke B."/>
            <person name="McHardy A."/>
            <person name="Meyer F."/>
            <person name="Pohle S."/>
            <person name="Rueckert C."/>
            <person name="Schneiker S."/>
            <person name="Zellermann E.-M."/>
            <person name="Puehler A."/>
            <person name="Eichenlaub R."/>
            <person name="Kaiser O."/>
            <person name="Bartels D."/>
        </authorList>
    </citation>
    <scope>NUCLEOTIDE SEQUENCE [LARGE SCALE GENOMIC DNA]</scope>
    <source>
        <strain>NCPPB 382</strain>
    </source>
</reference>
<organism>
    <name type="scientific">Clavibacter michiganensis subsp. michiganensis (strain NCPPB 382)</name>
    <dbReference type="NCBI Taxonomy" id="443906"/>
    <lineage>
        <taxon>Bacteria</taxon>
        <taxon>Bacillati</taxon>
        <taxon>Actinomycetota</taxon>
        <taxon>Actinomycetes</taxon>
        <taxon>Micrococcales</taxon>
        <taxon>Microbacteriaceae</taxon>
        <taxon>Clavibacter</taxon>
    </lineage>
</organism>
<keyword id="KW-0687">Ribonucleoprotein</keyword>
<keyword id="KW-0689">Ribosomal protein</keyword>
<keyword id="KW-0694">RNA-binding</keyword>
<keyword id="KW-0699">rRNA-binding</keyword>
<proteinExistence type="inferred from homology"/>
<gene>
    <name evidence="1" type="primary">rpsC</name>
    <name type="ordered locus">CMM_2611</name>
</gene>
<accession>A5CUA7</accession>
<comment type="function">
    <text evidence="1">Binds the lower part of the 30S subunit head. Binds mRNA in the 70S ribosome, positioning it for translation.</text>
</comment>
<comment type="subunit">
    <text evidence="1">Part of the 30S ribosomal subunit. Forms a tight complex with proteins S10 and S14.</text>
</comment>
<comment type="similarity">
    <text evidence="1">Belongs to the universal ribosomal protein uS3 family.</text>
</comment>
<evidence type="ECO:0000255" key="1">
    <source>
        <dbReference type="HAMAP-Rule" id="MF_01309"/>
    </source>
</evidence>
<evidence type="ECO:0000256" key="2">
    <source>
        <dbReference type="SAM" id="MobiDB-lite"/>
    </source>
</evidence>
<evidence type="ECO:0000305" key="3"/>
<sequence length="265" mass="29553">MGQKVNPYGFRLGITTDHVSRWFSDSTKKGQRYSDYVAEDVRIRTMLKTSLDRAGVARIEIERTRDRVRVDIYTARPGIVIGRRGVEAERIRADLEKLTGKQIQLNILEVKNPEAEAQLVAQGIAEQLAGRVAFRRAMRKGLQGAQRAGAKGVRIQVSGRLGGAEMSRSEFYREGRVPLHTLRANIDYGFYEARTSFGRIGVKVWVYKGDITNKDLAREQANQKSSRPERRNDRSDGRTGDRRTNAPRTAPAAEAAPVAAAGVEA</sequence>
<dbReference type="EMBL" id="AM711867">
    <property type="protein sequence ID" value="CAN02694.1"/>
    <property type="molecule type" value="Genomic_DNA"/>
</dbReference>
<dbReference type="RefSeq" id="WP_012039300.1">
    <property type="nucleotide sequence ID" value="NC_009480.1"/>
</dbReference>
<dbReference type="SMR" id="A5CUA7"/>
<dbReference type="GeneID" id="92984323"/>
<dbReference type="KEGG" id="cmi:CMM_2611"/>
<dbReference type="eggNOG" id="COG0092">
    <property type="taxonomic scope" value="Bacteria"/>
</dbReference>
<dbReference type="HOGENOM" id="CLU_058591_0_2_11"/>
<dbReference type="OrthoDB" id="9806396at2"/>
<dbReference type="Proteomes" id="UP000001564">
    <property type="component" value="Chromosome"/>
</dbReference>
<dbReference type="GO" id="GO:0022627">
    <property type="term" value="C:cytosolic small ribosomal subunit"/>
    <property type="evidence" value="ECO:0007669"/>
    <property type="project" value="TreeGrafter"/>
</dbReference>
<dbReference type="GO" id="GO:0003729">
    <property type="term" value="F:mRNA binding"/>
    <property type="evidence" value="ECO:0007669"/>
    <property type="project" value="UniProtKB-UniRule"/>
</dbReference>
<dbReference type="GO" id="GO:0019843">
    <property type="term" value="F:rRNA binding"/>
    <property type="evidence" value="ECO:0007669"/>
    <property type="project" value="UniProtKB-UniRule"/>
</dbReference>
<dbReference type="GO" id="GO:0003735">
    <property type="term" value="F:structural constituent of ribosome"/>
    <property type="evidence" value="ECO:0007669"/>
    <property type="project" value="InterPro"/>
</dbReference>
<dbReference type="GO" id="GO:0006412">
    <property type="term" value="P:translation"/>
    <property type="evidence" value="ECO:0007669"/>
    <property type="project" value="UniProtKB-UniRule"/>
</dbReference>
<dbReference type="CDD" id="cd02412">
    <property type="entry name" value="KH-II_30S_S3"/>
    <property type="match status" value="1"/>
</dbReference>
<dbReference type="FunFam" id="3.30.1140.32:FF:000002">
    <property type="entry name" value="30S ribosomal protein S3"/>
    <property type="match status" value="1"/>
</dbReference>
<dbReference type="FunFam" id="3.30.300.20:FF:000001">
    <property type="entry name" value="30S ribosomal protein S3"/>
    <property type="match status" value="1"/>
</dbReference>
<dbReference type="Gene3D" id="3.30.300.20">
    <property type="match status" value="1"/>
</dbReference>
<dbReference type="Gene3D" id="3.30.1140.32">
    <property type="entry name" value="Ribosomal protein S3, C-terminal domain"/>
    <property type="match status" value="1"/>
</dbReference>
<dbReference type="HAMAP" id="MF_01309_B">
    <property type="entry name" value="Ribosomal_uS3_B"/>
    <property type="match status" value="1"/>
</dbReference>
<dbReference type="InterPro" id="IPR004087">
    <property type="entry name" value="KH_dom"/>
</dbReference>
<dbReference type="InterPro" id="IPR015946">
    <property type="entry name" value="KH_dom-like_a/b"/>
</dbReference>
<dbReference type="InterPro" id="IPR004044">
    <property type="entry name" value="KH_dom_type_2"/>
</dbReference>
<dbReference type="InterPro" id="IPR009019">
    <property type="entry name" value="KH_sf_prok-type"/>
</dbReference>
<dbReference type="InterPro" id="IPR036419">
    <property type="entry name" value="Ribosomal_S3_C_sf"/>
</dbReference>
<dbReference type="InterPro" id="IPR005704">
    <property type="entry name" value="Ribosomal_uS3_bac-typ"/>
</dbReference>
<dbReference type="InterPro" id="IPR001351">
    <property type="entry name" value="Ribosomal_uS3_C"/>
</dbReference>
<dbReference type="InterPro" id="IPR018280">
    <property type="entry name" value="Ribosomal_uS3_CS"/>
</dbReference>
<dbReference type="NCBIfam" id="TIGR01009">
    <property type="entry name" value="rpsC_bact"/>
    <property type="match status" value="1"/>
</dbReference>
<dbReference type="PANTHER" id="PTHR11760">
    <property type="entry name" value="30S/40S RIBOSOMAL PROTEIN S3"/>
    <property type="match status" value="1"/>
</dbReference>
<dbReference type="PANTHER" id="PTHR11760:SF19">
    <property type="entry name" value="SMALL RIBOSOMAL SUBUNIT PROTEIN US3C"/>
    <property type="match status" value="1"/>
</dbReference>
<dbReference type="Pfam" id="PF07650">
    <property type="entry name" value="KH_2"/>
    <property type="match status" value="1"/>
</dbReference>
<dbReference type="Pfam" id="PF00189">
    <property type="entry name" value="Ribosomal_S3_C"/>
    <property type="match status" value="1"/>
</dbReference>
<dbReference type="SMART" id="SM00322">
    <property type="entry name" value="KH"/>
    <property type="match status" value="1"/>
</dbReference>
<dbReference type="SUPFAM" id="SSF54814">
    <property type="entry name" value="Prokaryotic type KH domain (KH-domain type II)"/>
    <property type="match status" value="1"/>
</dbReference>
<dbReference type="SUPFAM" id="SSF54821">
    <property type="entry name" value="Ribosomal protein S3 C-terminal domain"/>
    <property type="match status" value="1"/>
</dbReference>
<dbReference type="PROSITE" id="PS50823">
    <property type="entry name" value="KH_TYPE_2"/>
    <property type="match status" value="1"/>
</dbReference>
<dbReference type="PROSITE" id="PS00548">
    <property type="entry name" value="RIBOSOMAL_S3"/>
    <property type="match status" value="1"/>
</dbReference>
<protein>
    <recommendedName>
        <fullName evidence="1">Small ribosomal subunit protein uS3</fullName>
    </recommendedName>
    <alternativeName>
        <fullName evidence="3">30S ribosomal protein S3</fullName>
    </alternativeName>
</protein>
<feature type="chain" id="PRO_1000086105" description="Small ribosomal subunit protein uS3">
    <location>
        <begin position="1"/>
        <end position="265"/>
    </location>
</feature>
<feature type="domain" description="KH type-2" evidence="1">
    <location>
        <begin position="43"/>
        <end position="111"/>
    </location>
</feature>
<feature type="region of interest" description="Disordered" evidence="2">
    <location>
        <begin position="217"/>
        <end position="265"/>
    </location>
</feature>
<feature type="compositionally biased region" description="Basic and acidic residues" evidence="2">
    <location>
        <begin position="226"/>
        <end position="244"/>
    </location>
</feature>
<feature type="compositionally biased region" description="Low complexity" evidence="2">
    <location>
        <begin position="250"/>
        <end position="265"/>
    </location>
</feature>
<name>RS3_CLAM3</name>